<protein>
    <recommendedName>
        <fullName evidence="1">Elongation factor 4</fullName>
        <shortName evidence="1">EF-4</shortName>
        <ecNumber evidence="1">3.6.5.n1</ecNumber>
    </recommendedName>
    <alternativeName>
        <fullName evidence="1">Ribosomal back-translocase LepA</fullName>
    </alternativeName>
</protein>
<comment type="function">
    <text evidence="1">Required for accurate and efficient protein synthesis under certain stress conditions. May act as a fidelity factor of the translation reaction, by catalyzing a one-codon backward translocation of tRNAs on improperly translocated ribosomes. Back-translocation proceeds from a post-translocation (POST) complex to a pre-translocation (PRE) complex, thus giving elongation factor G a second chance to translocate the tRNAs correctly. Binds to ribosomes in a GTP-dependent manner.</text>
</comment>
<comment type="catalytic activity">
    <reaction evidence="1">
        <text>GTP + H2O = GDP + phosphate + H(+)</text>
        <dbReference type="Rhea" id="RHEA:19669"/>
        <dbReference type="ChEBI" id="CHEBI:15377"/>
        <dbReference type="ChEBI" id="CHEBI:15378"/>
        <dbReference type="ChEBI" id="CHEBI:37565"/>
        <dbReference type="ChEBI" id="CHEBI:43474"/>
        <dbReference type="ChEBI" id="CHEBI:58189"/>
        <dbReference type="EC" id="3.6.5.n1"/>
    </reaction>
</comment>
<comment type="subcellular location">
    <subcellularLocation>
        <location evidence="1">Cell membrane</location>
        <topology evidence="1">Peripheral membrane protein</topology>
        <orientation evidence="1">Cytoplasmic side</orientation>
    </subcellularLocation>
</comment>
<comment type="similarity">
    <text evidence="1">Belongs to the TRAFAC class translation factor GTPase superfamily. Classic translation factor GTPase family. LepA subfamily.</text>
</comment>
<name>LEPA_HALH5</name>
<accession>Q9KD76</accession>
<sequence length="609" mass="68305">MNREERLARQSRIRNFSIIAHIDHGKSTLADRILEKTSALTQREMKDQMLDAMDLERERGITIKLNAVQLVYKANDGNEYIFHLIDTPGHVDFSYEVSRSLAACEGALLIVDAAQGIEAQTLANVYLALDNDLEILPVINKIDLPSAEPERVRQEVEDVIGLDASEAVLASAKNGIGIEEILEQIVEKVPAPSGDPEGPLKALIFDSLYDSYRGVVAYIRIVEGSVKPGQKIKMMATGKEFEVTEVGVFTPKPEKREELTVGDVGFLTASIKNVGDTRVGDTITSANNPADEPLPGYRRMNPMVYCGLYPVDTNDYNDLREALERLELNDASLQYEPETSQALGFGFRCGFLGLLHMEIIQERIEREFGIDLITTAPSVVYSVQLTNGEVQQIDNPSNMPDRQKIEEVEEPYVKATIMVPNDFVGAVMELCQGKRGIFIDMQYLDENRVQIIYEIPLSEIVYDFFDQLKSNTKGYASFDYELIGYKPSNLVKMDILLNGEVVDALSVIVHRDSAYERGKQIVEKLKELIPRQQFEVPVQASIGTKIIARSTIKAMRKNVLAKCYGGDISRKRKLLEKQKEGKKRMKAVGNVEVPQEAFMAVLRMDEPKK</sequence>
<keyword id="KW-1003">Cell membrane</keyword>
<keyword id="KW-0342">GTP-binding</keyword>
<keyword id="KW-0378">Hydrolase</keyword>
<keyword id="KW-0472">Membrane</keyword>
<keyword id="KW-0547">Nucleotide-binding</keyword>
<keyword id="KW-0648">Protein biosynthesis</keyword>
<keyword id="KW-1185">Reference proteome</keyword>
<feature type="chain" id="PRO_0000176229" description="Elongation factor 4">
    <location>
        <begin position="1"/>
        <end position="609"/>
    </location>
</feature>
<feature type="domain" description="tr-type G">
    <location>
        <begin position="11"/>
        <end position="193"/>
    </location>
</feature>
<feature type="binding site" evidence="1">
    <location>
        <begin position="23"/>
        <end position="28"/>
    </location>
    <ligand>
        <name>GTP</name>
        <dbReference type="ChEBI" id="CHEBI:37565"/>
    </ligand>
</feature>
<feature type="binding site" evidence="1">
    <location>
        <begin position="140"/>
        <end position="143"/>
    </location>
    <ligand>
        <name>GTP</name>
        <dbReference type="ChEBI" id="CHEBI:37565"/>
    </ligand>
</feature>
<proteinExistence type="inferred from homology"/>
<dbReference type="EC" id="3.6.5.n1" evidence="1"/>
<dbReference type="EMBL" id="BA000004">
    <property type="protein sequence ID" value="BAB05061.1"/>
    <property type="molecule type" value="Genomic_DNA"/>
</dbReference>
<dbReference type="PIR" id="F83817">
    <property type="entry name" value="F83817"/>
</dbReference>
<dbReference type="RefSeq" id="WP_010897508.1">
    <property type="nucleotide sequence ID" value="NC_002570.2"/>
</dbReference>
<dbReference type="SMR" id="Q9KD76"/>
<dbReference type="STRING" id="272558.gene:10727236"/>
<dbReference type="KEGG" id="bha:BH1342"/>
<dbReference type="eggNOG" id="COG0481">
    <property type="taxonomic scope" value="Bacteria"/>
</dbReference>
<dbReference type="HOGENOM" id="CLU_009995_3_3_9"/>
<dbReference type="OrthoDB" id="9804431at2"/>
<dbReference type="Proteomes" id="UP000001258">
    <property type="component" value="Chromosome"/>
</dbReference>
<dbReference type="GO" id="GO:0005886">
    <property type="term" value="C:plasma membrane"/>
    <property type="evidence" value="ECO:0007669"/>
    <property type="project" value="UniProtKB-SubCell"/>
</dbReference>
<dbReference type="GO" id="GO:0005525">
    <property type="term" value="F:GTP binding"/>
    <property type="evidence" value="ECO:0007669"/>
    <property type="project" value="UniProtKB-UniRule"/>
</dbReference>
<dbReference type="GO" id="GO:0003924">
    <property type="term" value="F:GTPase activity"/>
    <property type="evidence" value="ECO:0007669"/>
    <property type="project" value="UniProtKB-UniRule"/>
</dbReference>
<dbReference type="GO" id="GO:0043022">
    <property type="term" value="F:ribosome binding"/>
    <property type="evidence" value="ECO:0007669"/>
    <property type="project" value="UniProtKB-UniRule"/>
</dbReference>
<dbReference type="GO" id="GO:0003746">
    <property type="term" value="F:translation elongation factor activity"/>
    <property type="evidence" value="ECO:0007669"/>
    <property type="project" value="UniProtKB-UniRule"/>
</dbReference>
<dbReference type="GO" id="GO:0045727">
    <property type="term" value="P:positive regulation of translation"/>
    <property type="evidence" value="ECO:0007669"/>
    <property type="project" value="UniProtKB-UniRule"/>
</dbReference>
<dbReference type="CDD" id="cd03699">
    <property type="entry name" value="EF4_II"/>
    <property type="match status" value="1"/>
</dbReference>
<dbReference type="CDD" id="cd16260">
    <property type="entry name" value="EF4_III"/>
    <property type="match status" value="1"/>
</dbReference>
<dbReference type="CDD" id="cd01890">
    <property type="entry name" value="LepA"/>
    <property type="match status" value="1"/>
</dbReference>
<dbReference type="CDD" id="cd03709">
    <property type="entry name" value="lepA_C"/>
    <property type="match status" value="1"/>
</dbReference>
<dbReference type="FunFam" id="3.40.50.300:FF:000078">
    <property type="entry name" value="Elongation factor 4"/>
    <property type="match status" value="1"/>
</dbReference>
<dbReference type="FunFam" id="2.40.30.10:FF:000015">
    <property type="entry name" value="Translation factor GUF1, mitochondrial"/>
    <property type="match status" value="1"/>
</dbReference>
<dbReference type="FunFam" id="3.30.70.240:FF:000007">
    <property type="entry name" value="Translation factor GUF1, mitochondrial"/>
    <property type="match status" value="1"/>
</dbReference>
<dbReference type="FunFam" id="3.30.70.2570:FF:000001">
    <property type="entry name" value="Translation factor GUF1, mitochondrial"/>
    <property type="match status" value="1"/>
</dbReference>
<dbReference type="FunFam" id="3.30.70.870:FF:000004">
    <property type="entry name" value="Translation factor GUF1, mitochondrial"/>
    <property type="match status" value="1"/>
</dbReference>
<dbReference type="Gene3D" id="3.30.70.240">
    <property type="match status" value="1"/>
</dbReference>
<dbReference type="Gene3D" id="3.30.70.2570">
    <property type="entry name" value="Elongation factor 4, C-terminal domain"/>
    <property type="match status" value="1"/>
</dbReference>
<dbReference type="Gene3D" id="3.30.70.870">
    <property type="entry name" value="Elongation Factor G (Translational Gtpase), domain 3"/>
    <property type="match status" value="1"/>
</dbReference>
<dbReference type="Gene3D" id="3.40.50.300">
    <property type="entry name" value="P-loop containing nucleotide triphosphate hydrolases"/>
    <property type="match status" value="1"/>
</dbReference>
<dbReference type="Gene3D" id="2.40.30.10">
    <property type="entry name" value="Translation factors"/>
    <property type="match status" value="1"/>
</dbReference>
<dbReference type="HAMAP" id="MF_00071">
    <property type="entry name" value="LepA"/>
    <property type="match status" value="1"/>
</dbReference>
<dbReference type="InterPro" id="IPR006297">
    <property type="entry name" value="EF-4"/>
</dbReference>
<dbReference type="InterPro" id="IPR041095">
    <property type="entry name" value="EFG_II"/>
</dbReference>
<dbReference type="InterPro" id="IPR035647">
    <property type="entry name" value="EFG_III/V"/>
</dbReference>
<dbReference type="InterPro" id="IPR000640">
    <property type="entry name" value="EFG_V-like"/>
</dbReference>
<dbReference type="InterPro" id="IPR004161">
    <property type="entry name" value="EFTu-like_2"/>
</dbReference>
<dbReference type="InterPro" id="IPR031157">
    <property type="entry name" value="G_TR_CS"/>
</dbReference>
<dbReference type="InterPro" id="IPR038363">
    <property type="entry name" value="LepA_C_sf"/>
</dbReference>
<dbReference type="InterPro" id="IPR013842">
    <property type="entry name" value="LepA_CTD"/>
</dbReference>
<dbReference type="InterPro" id="IPR035654">
    <property type="entry name" value="LepA_IV"/>
</dbReference>
<dbReference type="InterPro" id="IPR027417">
    <property type="entry name" value="P-loop_NTPase"/>
</dbReference>
<dbReference type="InterPro" id="IPR005225">
    <property type="entry name" value="Small_GTP-bd"/>
</dbReference>
<dbReference type="InterPro" id="IPR000795">
    <property type="entry name" value="T_Tr_GTP-bd_dom"/>
</dbReference>
<dbReference type="InterPro" id="IPR009000">
    <property type="entry name" value="Transl_B-barrel_sf"/>
</dbReference>
<dbReference type="NCBIfam" id="TIGR01393">
    <property type="entry name" value="lepA"/>
    <property type="match status" value="1"/>
</dbReference>
<dbReference type="NCBIfam" id="TIGR00231">
    <property type="entry name" value="small_GTP"/>
    <property type="match status" value="1"/>
</dbReference>
<dbReference type="PANTHER" id="PTHR43512:SF4">
    <property type="entry name" value="TRANSLATION FACTOR GUF1 HOMOLOG, CHLOROPLASTIC"/>
    <property type="match status" value="1"/>
</dbReference>
<dbReference type="PANTHER" id="PTHR43512">
    <property type="entry name" value="TRANSLATION FACTOR GUF1-RELATED"/>
    <property type="match status" value="1"/>
</dbReference>
<dbReference type="Pfam" id="PF00679">
    <property type="entry name" value="EFG_C"/>
    <property type="match status" value="1"/>
</dbReference>
<dbReference type="Pfam" id="PF14492">
    <property type="entry name" value="EFG_III"/>
    <property type="match status" value="1"/>
</dbReference>
<dbReference type="Pfam" id="PF00009">
    <property type="entry name" value="GTP_EFTU"/>
    <property type="match status" value="1"/>
</dbReference>
<dbReference type="Pfam" id="PF03144">
    <property type="entry name" value="GTP_EFTU_D2"/>
    <property type="match status" value="1"/>
</dbReference>
<dbReference type="Pfam" id="PF06421">
    <property type="entry name" value="LepA_C"/>
    <property type="match status" value="1"/>
</dbReference>
<dbReference type="PRINTS" id="PR00315">
    <property type="entry name" value="ELONGATNFCT"/>
</dbReference>
<dbReference type="SMART" id="SM00838">
    <property type="entry name" value="EFG_C"/>
    <property type="match status" value="1"/>
</dbReference>
<dbReference type="SUPFAM" id="SSF54980">
    <property type="entry name" value="EF-G C-terminal domain-like"/>
    <property type="match status" value="2"/>
</dbReference>
<dbReference type="SUPFAM" id="SSF52540">
    <property type="entry name" value="P-loop containing nucleoside triphosphate hydrolases"/>
    <property type="match status" value="1"/>
</dbReference>
<dbReference type="SUPFAM" id="SSF50447">
    <property type="entry name" value="Translation proteins"/>
    <property type="match status" value="1"/>
</dbReference>
<dbReference type="PROSITE" id="PS00301">
    <property type="entry name" value="G_TR_1"/>
    <property type="match status" value="1"/>
</dbReference>
<dbReference type="PROSITE" id="PS51722">
    <property type="entry name" value="G_TR_2"/>
    <property type="match status" value="1"/>
</dbReference>
<organism>
    <name type="scientific">Halalkalibacterium halodurans (strain ATCC BAA-125 / DSM 18197 / FERM 7344 / JCM 9153 / C-125)</name>
    <name type="common">Bacillus halodurans</name>
    <dbReference type="NCBI Taxonomy" id="272558"/>
    <lineage>
        <taxon>Bacteria</taxon>
        <taxon>Bacillati</taxon>
        <taxon>Bacillota</taxon>
        <taxon>Bacilli</taxon>
        <taxon>Bacillales</taxon>
        <taxon>Bacillaceae</taxon>
        <taxon>Halalkalibacterium (ex Joshi et al. 2022)</taxon>
    </lineage>
</organism>
<evidence type="ECO:0000255" key="1">
    <source>
        <dbReference type="HAMAP-Rule" id="MF_00071"/>
    </source>
</evidence>
<gene>
    <name evidence="1" type="primary">lepA</name>
    <name type="ordered locus">BH1342</name>
</gene>
<reference key="1">
    <citation type="journal article" date="2000" name="Nucleic Acids Res.">
        <title>Complete genome sequence of the alkaliphilic bacterium Bacillus halodurans and genomic sequence comparison with Bacillus subtilis.</title>
        <authorList>
            <person name="Takami H."/>
            <person name="Nakasone K."/>
            <person name="Takaki Y."/>
            <person name="Maeno G."/>
            <person name="Sasaki R."/>
            <person name="Masui N."/>
            <person name="Fuji F."/>
            <person name="Hirama C."/>
            <person name="Nakamura Y."/>
            <person name="Ogasawara N."/>
            <person name="Kuhara S."/>
            <person name="Horikoshi K."/>
        </authorList>
    </citation>
    <scope>NUCLEOTIDE SEQUENCE [LARGE SCALE GENOMIC DNA]</scope>
    <source>
        <strain>ATCC BAA-125 / DSM 18197 / FERM 7344 / JCM 9153 / C-125</strain>
    </source>
</reference>